<dbReference type="EMBL" id="CP000232">
    <property type="protein sequence ID" value="ABC20726.1"/>
    <property type="molecule type" value="Genomic_DNA"/>
</dbReference>
<dbReference type="RefSeq" id="YP_431269.1">
    <property type="nucleotide sequence ID" value="NC_007644.1"/>
</dbReference>
<dbReference type="SMR" id="Q2RFR3"/>
<dbReference type="STRING" id="264732.Moth_2444"/>
<dbReference type="EnsemblBacteria" id="ABC20726">
    <property type="protein sequence ID" value="ABC20726"/>
    <property type="gene ID" value="Moth_2444"/>
</dbReference>
<dbReference type="KEGG" id="mta:Moth_2444"/>
<dbReference type="PATRIC" id="fig|264732.11.peg.2662"/>
<dbReference type="eggNOG" id="COG0256">
    <property type="taxonomic scope" value="Bacteria"/>
</dbReference>
<dbReference type="HOGENOM" id="CLU_098841_0_1_9"/>
<dbReference type="OrthoDB" id="9810939at2"/>
<dbReference type="GO" id="GO:0022625">
    <property type="term" value="C:cytosolic large ribosomal subunit"/>
    <property type="evidence" value="ECO:0007669"/>
    <property type="project" value="TreeGrafter"/>
</dbReference>
<dbReference type="GO" id="GO:0008097">
    <property type="term" value="F:5S rRNA binding"/>
    <property type="evidence" value="ECO:0007669"/>
    <property type="project" value="TreeGrafter"/>
</dbReference>
<dbReference type="GO" id="GO:0003735">
    <property type="term" value="F:structural constituent of ribosome"/>
    <property type="evidence" value="ECO:0007669"/>
    <property type="project" value="InterPro"/>
</dbReference>
<dbReference type="GO" id="GO:0006412">
    <property type="term" value="P:translation"/>
    <property type="evidence" value="ECO:0007669"/>
    <property type="project" value="UniProtKB-UniRule"/>
</dbReference>
<dbReference type="CDD" id="cd00432">
    <property type="entry name" value="Ribosomal_L18_L5e"/>
    <property type="match status" value="1"/>
</dbReference>
<dbReference type="FunFam" id="3.30.420.100:FF:000001">
    <property type="entry name" value="50S ribosomal protein L18"/>
    <property type="match status" value="1"/>
</dbReference>
<dbReference type="Gene3D" id="3.30.420.100">
    <property type="match status" value="1"/>
</dbReference>
<dbReference type="HAMAP" id="MF_01337_B">
    <property type="entry name" value="Ribosomal_uL18_B"/>
    <property type="match status" value="1"/>
</dbReference>
<dbReference type="InterPro" id="IPR004389">
    <property type="entry name" value="Ribosomal_uL18_bac-type"/>
</dbReference>
<dbReference type="InterPro" id="IPR005484">
    <property type="entry name" value="Ribosomal_uL18_bac/euk"/>
</dbReference>
<dbReference type="NCBIfam" id="TIGR00060">
    <property type="entry name" value="L18_bact"/>
    <property type="match status" value="1"/>
</dbReference>
<dbReference type="PANTHER" id="PTHR12899">
    <property type="entry name" value="39S RIBOSOMAL PROTEIN L18, MITOCHONDRIAL"/>
    <property type="match status" value="1"/>
</dbReference>
<dbReference type="PANTHER" id="PTHR12899:SF3">
    <property type="entry name" value="LARGE RIBOSOMAL SUBUNIT PROTEIN UL18M"/>
    <property type="match status" value="1"/>
</dbReference>
<dbReference type="Pfam" id="PF00861">
    <property type="entry name" value="Ribosomal_L18p"/>
    <property type="match status" value="1"/>
</dbReference>
<dbReference type="SUPFAM" id="SSF53137">
    <property type="entry name" value="Translational machinery components"/>
    <property type="match status" value="1"/>
</dbReference>
<evidence type="ECO:0000255" key="1">
    <source>
        <dbReference type="HAMAP-Rule" id="MF_01337"/>
    </source>
</evidence>
<evidence type="ECO:0000305" key="2"/>
<comment type="function">
    <text evidence="1">This is one of the proteins that bind and probably mediate the attachment of the 5S RNA into the large ribosomal subunit, where it forms part of the central protuberance.</text>
</comment>
<comment type="subunit">
    <text evidence="1">Part of the 50S ribosomal subunit; part of the 5S rRNA/L5/L18/L25 subcomplex. Contacts the 5S and 23S rRNAs.</text>
</comment>
<comment type="similarity">
    <text evidence="1">Belongs to the universal ribosomal protein uL18 family.</text>
</comment>
<keyword id="KW-0687">Ribonucleoprotein</keyword>
<keyword id="KW-0689">Ribosomal protein</keyword>
<keyword id="KW-0694">RNA-binding</keyword>
<keyword id="KW-0699">rRNA-binding</keyword>
<protein>
    <recommendedName>
        <fullName evidence="1">Large ribosomal subunit protein uL18</fullName>
    </recommendedName>
    <alternativeName>
        <fullName evidence="2">50S ribosomal protein L18</fullName>
    </alternativeName>
</protein>
<name>RL18_MOOTA</name>
<sequence length="121" mass="13461">MFIKKDRKLARQRKHLRVRRRLMGTPERPRLSVYRSLRHIYAQVIDDTRGVTLVAASTLDPALKGLESTGNITAARKVGELIARKALAKGINKVVFDRGGNIYHGRIAAVAEGAREAGLNF</sequence>
<reference key="1">
    <citation type="journal article" date="2008" name="Environ. Microbiol.">
        <title>The complete genome sequence of Moorella thermoacetica (f. Clostridium thermoaceticum).</title>
        <authorList>
            <person name="Pierce E."/>
            <person name="Xie G."/>
            <person name="Barabote R.D."/>
            <person name="Saunders E."/>
            <person name="Han C.S."/>
            <person name="Detter J.C."/>
            <person name="Richardson P."/>
            <person name="Brettin T.S."/>
            <person name="Das A."/>
            <person name="Ljungdahl L.G."/>
            <person name="Ragsdale S.W."/>
        </authorList>
    </citation>
    <scope>NUCLEOTIDE SEQUENCE [LARGE SCALE GENOMIC DNA]</scope>
    <source>
        <strain>ATCC 39073 / JCM 9320</strain>
    </source>
</reference>
<feature type="chain" id="PRO_0000251329" description="Large ribosomal subunit protein uL18">
    <location>
        <begin position="1"/>
        <end position="121"/>
    </location>
</feature>
<organism>
    <name type="scientific">Moorella thermoacetica (strain ATCC 39073 / JCM 9320)</name>
    <dbReference type="NCBI Taxonomy" id="264732"/>
    <lineage>
        <taxon>Bacteria</taxon>
        <taxon>Bacillati</taxon>
        <taxon>Bacillota</taxon>
        <taxon>Clostridia</taxon>
        <taxon>Moorellales</taxon>
        <taxon>Moorellaceae</taxon>
        <taxon>Moorella</taxon>
    </lineage>
</organism>
<proteinExistence type="inferred from homology"/>
<accession>Q2RFR3</accession>
<gene>
    <name evidence="1" type="primary">rplR</name>
    <name type="ordered locus">Moth_2444</name>
</gene>